<keyword id="KW-0002">3D-structure</keyword>
<keyword id="KW-0045">Antibiotic biosynthesis</keyword>
<keyword id="KW-0285">Flavoprotein</keyword>
<keyword id="KW-0288">FMN</keyword>
<keyword id="KW-0560">Oxidoreductase</keyword>
<comment type="function">
    <text evidence="2 3">Catalyzes the oxidation of p-hydroxymandelate to p-hydroxybenzoylformate in the biosynthesis of L-(4-hydroxyphenyl)glycine and L-(3,5-dihydroxyphenyl)glycine, 2 non-proteinogenic amino acids occurring in the vancomycin group of antibiotics.</text>
</comment>
<comment type="catalytic activity">
    <reaction evidence="2 3">
        <text>(S)-4-hydroxymandelate + O2 = 4-hydroxyphenylglyoxylate + H2O2</text>
        <dbReference type="Rhea" id="RHEA:41227"/>
        <dbReference type="ChEBI" id="CHEBI:15379"/>
        <dbReference type="ChEBI" id="CHEBI:16240"/>
        <dbReference type="ChEBI" id="CHEBI:17210"/>
        <dbReference type="ChEBI" id="CHEBI:58586"/>
        <dbReference type="EC" id="1.1.3.46"/>
    </reaction>
</comment>
<comment type="cofactor">
    <cofactor evidence="1 2 3">
        <name>FMN</name>
        <dbReference type="ChEBI" id="CHEBI:58210"/>
    </cofactor>
</comment>
<comment type="pathway">
    <text evidence="4">Antibiotic biosynthesis; vancomycin biosynthesis.</text>
</comment>
<comment type="similarity">
    <text evidence="1">Belongs to the FMN-dependent alpha-hydroxy acid dehydrogenase family.</text>
</comment>
<evidence type="ECO:0000255" key="1">
    <source>
        <dbReference type="PROSITE-ProRule" id="PRU00683"/>
    </source>
</evidence>
<evidence type="ECO:0000269" key="2">
    <source>
    </source>
</evidence>
<evidence type="ECO:0000269" key="3">
    <source>
    </source>
</evidence>
<evidence type="ECO:0000269" key="4">
    <source>
    </source>
</evidence>
<evidence type="ECO:0007829" key="5">
    <source>
        <dbReference type="PDB" id="5ZZQ"/>
    </source>
</evidence>
<evidence type="ECO:0007829" key="6">
    <source>
        <dbReference type="PDB" id="5ZZR"/>
    </source>
</evidence>
<sequence>MTYVSLADLERAARDVLPGEIFDFLAGGSGTEASLVANRTALERVFVIPRMLRDLTDVTTEIDIFGRRAALPMAVAPVAYQRLFHPEGELAVARAARDAGVPYTICTLSSVSLEEIAAVGGRPWFQLYWLRDEKRSLDLVRRAEDAGCEAIVFTVDVPWMGRRLRDMRNGFALPEWVTAANFDAGTAAHRRTQGVSAVADHTAREFAPATWESVEAVRAHTDLPVVLKGILAVEDARRAVDAGAGGIVVSNHGGRQLDGAVPGIEMLGEIVAAVSGGCEVLVDGGIRSGGDVLKATALGASAVLVGRPVMWALAAAGQDGVRQLLELLAEEVRDAMGLAGCESVGAARRLNTKLGVV</sequence>
<accession>O52792</accession>
<gene>
    <name type="primary">hmo</name>
</gene>
<name>HMO_AMYOR</name>
<organism>
    <name type="scientific">Amycolatopsis orientalis</name>
    <name type="common">Nocardia orientalis</name>
    <dbReference type="NCBI Taxonomy" id="31958"/>
    <lineage>
        <taxon>Bacteria</taxon>
        <taxon>Bacillati</taxon>
        <taxon>Actinomycetota</taxon>
        <taxon>Actinomycetes</taxon>
        <taxon>Pseudonocardiales</taxon>
        <taxon>Pseudonocardiaceae</taxon>
        <taxon>Amycolatopsis</taxon>
    </lineage>
</organism>
<protein>
    <recommendedName>
        <fullName>4-hydroxymandelate oxidase</fullName>
        <ecNumber>1.1.3.46</ecNumber>
    </recommendedName>
</protein>
<reference key="1">
    <citation type="journal article" date="1998" name="Chem. Biol.">
        <title>Sequencing and analysis of genes involved in the biosynthesis of a vancomycin group antibiotic.</title>
        <authorList>
            <person name="van Wageningen A."/>
            <person name="Kirkpatrick P."/>
            <person name="Williams D."/>
            <person name="Harris B."/>
            <person name="Kershaw J."/>
            <person name="Lennard N."/>
            <person name="Jones M."/>
            <person name="Jones S."/>
            <person name="Solenberg P."/>
        </authorList>
    </citation>
    <scope>NUCLEOTIDE SEQUENCE [GENOMIC DNA]</scope>
    <scope>PATHWAY</scope>
</reference>
<reference key="2">
    <citation type="journal article" date="2000" name="Chem. Biol.">
        <title>Biosynthesis of L-p-hydroxyphenylglycine, a non-proteinogenic amino acid constituent of peptide antibiotics.</title>
        <authorList>
            <person name="Hubbard B.K."/>
            <person name="Thomas M.G."/>
            <person name="Walsh C.T."/>
        </authorList>
    </citation>
    <scope>FUNCTION</scope>
    <scope>CATALYTIC ACTIVITY</scope>
    <scope>COFACTOR</scope>
</reference>
<reference key="3">
    <citation type="journal article" date="2001" name="Chem. Commun. (Camb.)">
        <title>Characterisation of a hydroxymandelate oxidase involved in the biosynthesis of two unusual amino acids occurring in the vancomycin group of antibiotics.</title>
        <authorList>
            <person name="Li T.L."/>
            <person name="Choroba O.W."/>
            <person name="Charles E.H."/>
            <person name="Sandercock A.M."/>
            <person name="Williams D.H."/>
            <person name="Spencer J.B."/>
        </authorList>
    </citation>
    <scope>FUNCTION</scope>
    <scope>CATALYTIC ACTIVITY</scope>
    <scope>COFACTOR</scope>
</reference>
<feature type="chain" id="PRO_0000430441" description="4-hydroxymandelate oxidase">
    <location>
        <begin position="1"/>
        <end position="357"/>
    </location>
</feature>
<feature type="domain" description="FMN hydroxy acid dehydrogenase" evidence="1">
    <location>
        <begin position="1"/>
        <end position="357"/>
    </location>
</feature>
<feature type="active site" description="Proton acceptor" evidence="1">
    <location>
        <position position="252"/>
    </location>
</feature>
<feature type="binding site" evidence="1">
    <location>
        <position position="126"/>
    </location>
    <ligand>
        <name>FMN</name>
        <dbReference type="ChEBI" id="CHEBI:58210"/>
    </ligand>
</feature>
<feature type="binding site" evidence="1">
    <location>
        <position position="128"/>
    </location>
    <ligand>
        <name>a 2-oxocarboxylate</name>
        <dbReference type="ChEBI" id="CHEBI:35179"/>
    </ligand>
</feature>
<feature type="binding site" evidence="1">
    <location>
        <position position="154"/>
    </location>
    <ligand>
        <name>FMN</name>
        <dbReference type="ChEBI" id="CHEBI:58210"/>
    </ligand>
</feature>
<feature type="binding site" evidence="1">
    <location>
        <position position="163"/>
    </location>
    <ligand>
        <name>a 2-oxocarboxylate</name>
        <dbReference type="ChEBI" id="CHEBI:35179"/>
    </ligand>
</feature>
<feature type="binding site" evidence="1">
    <location>
        <position position="228"/>
    </location>
    <ligand>
        <name>FMN</name>
        <dbReference type="ChEBI" id="CHEBI:58210"/>
    </ligand>
</feature>
<feature type="binding site" evidence="1">
    <location>
        <position position="255"/>
    </location>
    <ligand>
        <name>a 2-oxocarboxylate</name>
        <dbReference type="ChEBI" id="CHEBI:35179"/>
    </ligand>
</feature>
<feature type="binding site" evidence="1">
    <location>
        <begin position="283"/>
        <end position="287"/>
    </location>
    <ligand>
        <name>FMN</name>
        <dbReference type="ChEBI" id="CHEBI:58210"/>
    </ligand>
</feature>
<feature type="binding site" evidence="1">
    <location>
        <begin position="306"/>
        <end position="307"/>
    </location>
    <ligand>
        <name>FMN</name>
        <dbReference type="ChEBI" id="CHEBI:58210"/>
    </ligand>
</feature>
<feature type="helix" evidence="6">
    <location>
        <begin position="6"/>
        <end position="16"/>
    </location>
</feature>
<feature type="helix" evidence="6">
    <location>
        <begin position="19"/>
        <end position="26"/>
    </location>
</feature>
<feature type="helix" evidence="6">
    <location>
        <begin position="33"/>
        <end position="44"/>
    </location>
</feature>
<feature type="strand" evidence="6">
    <location>
        <begin position="45"/>
        <end position="48"/>
    </location>
</feature>
<feature type="strand" evidence="6">
    <location>
        <begin position="62"/>
        <end position="64"/>
    </location>
</feature>
<feature type="strand" evidence="6">
    <location>
        <begin position="67"/>
        <end position="75"/>
    </location>
</feature>
<feature type="helix" evidence="6">
    <location>
        <begin position="81"/>
        <end position="83"/>
    </location>
</feature>
<feature type="helix" evidence="6">
    <location>
        <begin position="88"/>
        <end position="99"/>
    </location>
</feature>
<feature type="strand" evidence="6">
    <location>
        <begin position="103"/>
        <end position="106"/>
    </location>
</feature>
<feature type="helix" evidence="6">
    <location>
        <begin position="113"/>
        <end position="118"/>
    </location>
</feature>
<feature type="strand" evidence="6">
    <location>
        <begin position="124"/>
        <end position="127"/>
    </location>
</feature>
<feature type="strand" evidence="5">
    <location>
        <begin position="130"/>
        <end position="132"/>
    </location>
</feature>
<feature type="helix" evidence="6">
    <location>
        <begin position="133"/>
        <end position="145"/>
    </location>
</feature>
<feature type="strand" evidence="6">
    <location>
        <begin position="151"/>
        <end position="154"/>
    </location>
</feature>
<feature type="helix" evidence="6">
    <location>
        <begin position="164"/>
        <end position="169"/>
    </location>
</feature>
<feature type="turn" evidence="5">
    <location>
        <begin position="187"/>
        <end position="189"/>
    </location>
</feature>
<feature type="helix" evidence="5">
    <location>
        <begin position="197"/>
        <end position="205"/>
    </location>
</feature>
<feature type="helix" evidence="6">
    <location>
        <begin position="211"/>
        <end position="220"/>
    </location>
</feature>
<feature type="strand" evidence="6">
    <location>
        <begin position="225"/>
        <end position="230"/>
    </location>
</feature>
<feature type="helix" evidence="6">
    <location>
        <begin position="233"/>
        <end position="241"/>
    </location>
</feature>
<feature type="strand" evidence="6">
    <location>
        <begin position="245"/>
        <end position="249"/>
    </location>
</feature>
<feature type="helix" evidence="6">
    <location>
        <begin position="252"/>
        <end position="254"/>
    </location>
</feature>
<feature type="helix" evidence="6">
    <location>
        <begin position="263"/>
        <end position="274"/>
    </location>
</feature>
<feature type="strand" evidence="6">
    <location>
        <begin position="277"/>
        <end position="282"/>
    </location>
</feature>
<feature type="helix" evidence="6">
    <location>
        <begin position="289"/>
        <end position="297"/>
    </location>
</feature>
<feature type="strand" evidence="6">
    <location>
        <begin position="301"/>
        <end position="305"/>
    </location>
</feature>
<feature type="helix" evidence="6">
    <location>
        <begin position="307"/>
        <end position="338"/>
    </location>
</feature>
<feature type="helix" evidence="6">
    <location>
        <begin position="344"/>
        <end position="348"/>
    </location>
</feature>
<feature type="strand" evidence="6">
    <location>
        <begin position="351"/>
        <end position="354"/>
    </location>
</feature>
<dbReference type="EC" id="1.1.3.46"/>
<dbReference type="EMBL" id="AJ223998">
    <property type="protein sequence ID" value="CAA11762.1"/>
    <property type="molecule type" value="Genomic_DNA"/>
</dbReference>
<dbReference type="PIR" id="T17471">
    <property type="entry name" value="T17471"/>
</dbReference>
<dbReference type="PDB" id="5ZZP">
    <property type="method" value="X-ray"/>
    <property type="resolution" value="1.39 A"/>
    <property type="chains" value="A=1-357"/>
</dbReference>
<dbReference type="PDB" id="5ZZQ">
    <property type="method" value="X-ray"/>
    <property type="resolution" value="1.32 A"/>
    <property type="chains" value="A=1-357"/>
</dbReference>
<dbReference type="PDB" id="5ZZR">
    <property type="method" value="X-ray"/>
    <property type="resolution" value="1.31 A"/>
    <property type="chains" value="A=1-357"/>
</dbReference>
<dbReference type="PDB" id="5ZZS">
    <property type="method" value="X-ray"/>
    <property type="resolution" value="1.40 A"/>
    <property type="chains" value="A=1-357"/>
</dbReference>
<dbReference type="PDB" id="5ZZT">
    <property type="method" value="X-ray"/>
    <property type="resolution" value="1.35 A"/>
    <property type="chains" value="A=1-357"/>
</dbReference>
<dbReference type="PDB" id="5ZZX">
    <property type="method" value="X-ray"/>
    <property type="resolution" value="1.49 A"/>
    <property type="chains" value="A=1-357"/>
</dbReference>
<dbReference type="PDB" id="5ZZY">
    <property type="method" value="X-ray"/>
    <property type="resolution" value="1.50 A"/>
    <property type="chains" value="A=1-357"/>
</dbReference>
<dbReference type="PDB" id="5ZZZ">
    <property type="method" value="X-ray"/>
    <property type="resolution" value="1.45 A"/>
    <property type="chains" value="A=1-357"/>
</dbReference>
<dbReference type="PDB" id="6A00">
    <property type="method" value="X-ray"/>
    <property type="resolution" value="1.59 A"/>
    <property type="chains" value="A=1-357"/>
</dbReference>
<dbReference type="PDB" id="6A01">
    <property type="method" value="X-ray"/>
    <property type="resolution" value="1.87 A"/>
    <property type="chains" value="A=1-357"/>
</dbReference>
<dbReference type="PDB" id="6A08">
    <property type="method" value="X-ray"/>
    <property type="resolution" value="1.55 A"/>
    <property type="chains" value="A=1-357"/>
</dbReference>
<dbReference type="PDB" id="6A0B">
    <property type="method" value="X-ray"/>
    <property type="resolution" value="1.65 A"/>
    <property type="chains" value="A=1-357"/>
</dbReference>
<dbReference type="PDB" id="6A0D">
    <property type="method" value="X-ray"/>
    <property type="resolution" value="1.65 A"/>
    <property type="chains" value="A=1-357"/>
</dbReference>
<dbReference type="PDB" id="6A0G">
    <property type="method" value="X-ray"/>
    <property type="resolution" value="1.80 A"/>
    <property type="chains" value="A=1-357"/>
</dbReference>
<dbReference type="PDB" id="6A0M">
    <property type="method" value="X-ray"/>
    <property type="resolution" value="1.75 A"/>
    <property type="chains" value="A=1-357"/>
</dbReference>
<dbReference type="PDB" id="6A0O">
    <property type="method" value="X-ray"/>
    <property type="resolution" value="1.55 A"/>
    <property type="chains" value="A=1-357"/>
</dbReference>
<dbReference type="PDB" id="6A0V">
    <property type="method" value="X-ray"/>
    <property type="resolution" value="1.39 A"/>
    <property type="chains" value="A=1-357"/>
</dbReference>
<dbReference type="PDB" id="6A0Y">
    <property type="method" value="X-ray"/>
    <property type="resolution" value="1.70 A"/>
    <property type="chains" value="A=1-357"/>
</dbReference>
<dbReference type="PDB" id="6A11">
    <property type="method" value="X-ray"/>
    <property type="resolution" value="1.45 A"/>
    <property type="chains" value="A=1-357"/>
</dbReference>
<dbReference type="PDB" id="6A13">
    <property type="method" value="X-ray"/>
    <property type="resolution" value="1.70 A"/>
    <property type="chains" value="A=1-357"/>
</dbReference>
<dbReference type="PDB" id="6A19">
    <property type="method" value="X-ray"/>
    <property type="resolution" value="1.55 A"/>
    <property type="chains" value="A=1-357"/>
</dbReference>
<dbReference type="PDB" id="6A1A">
    <property type="method" value="X-ray"/>
    <property type="resolution" value="1.35 A"/>
    <property type="chains" value="A=1-357"/>
</dbReference>
<dbReference type="PDB" id="6A1B">
    <property type="method" value="X-ray"/>
    <property type="resolution" value="1.47 A"/>
    <property type="chains" value="A=1-357"/>
</dbReference>
<dbReference type="PDB" id="6A1H">
    <property type="method" value="X-ray"/>
    <property type="resolution" value="1.36 A"/>
    <property type="chains" value="A=1-357"/>
</dbReference>
<dbReference type="PDB" id="6A1L">
    <property type="method" value="X-ray"/>
    <property type="resolution" value="1.40 A"/>
    <property type="chains" value="A=1-357"/>
</dbReference>
<dbReference type="PDB" id="6A1M">
    <property type="method" value="X-ray"/>
    <property type="resolution" value="1.55 A"/>
    <property type="chains" value="A=1-357"/>
</dbReference>
<dbReference type="PDB" id="6A1N">
    <property type="method" value="X-ray"/>
    <property type="resolution" value="1.42 A"/>
    <property type="chains" value="A=1-357"/>
</dbReference>
<dbReference type="PDB" id="6A1P">
    <property type="method" value="X-ray"/>
    <property type="resolution" value="1.51 A"/>
    <property type="chains" value="A=1-357"/>
</dbReference>
<dbReference type="PDB" id="6A1R">
    <property type="method" value="X-ray"/>
    <property type="resolution" value="1.65 A"/>
    <property type="chains" value="A=1-357"/>
</dbReference>
<dbReference type="PDB" id="6A1W">
    <property type="method" value="X-ray"/>
    <property type="resolution" value="1.70 A"/>
    <property type="chains" value="A=1-357"/>
</dbReference>
<dbReference type="PDB" id="6A21">
    <property type="method" value="X-ray"/>
    <property type="resolution" value="1.50 A"/>
    <property type="chains" value="A=1-357"/>
</dbReference>
<dbReference type="PDB" id="6A23">
    <property type="method" value="X-ray"/>
    <property type="resolution" value="1.65 A"/>
    <property type="chains" value="A=1-357"/>
</dbReference>
<dbReference type="PDB" id="6A24">
    <property type="method" value="X-ray"/>
    <property type="resolution" value="1.39 A"/>
    <property type="chains" value="A=1-357"/>
</dbReference>
<dbReference type="PDB" id="6A36">
    <property type="method" value="X-ray"/>
    <property type="resolution" value="1.44 A"/>
    <property type="chains" value="A=1-357"/>
</dbReference>
<dbReference type="PDB" id="6A39">
    <property type="method" value="X-ray"/>
    <property type="resolution" value="1.89 A"/>
    <property type="chains" value="A=1-357"/>
</dbReference>
<dbReference type="PDB" id="6A3D">
    <property type="method" value="X-ray"/>
    <property type="resolution" value="1.92 A"/>
    <property type="chains" value="A=1-357"/>
</dbReference>
<dbReference type="PDB" id="6A3T">
    <property type="method" value="X-ray"/>
    <property type="resolution" value="2.51 A"/>
    <property type="chains" value="A=1-357"/>
</dbReference>
<dbReference type="PDB" id="6A4G">
    <property type="method" value="X-ray"/>
    <property type="resolution" value="2.04 A"/>
    <property type="chains" value="A=1-357"/>
</dbReference>
<dbReference type="PDB" id="6A4H">
    <property type="method" value="X-ray"/>
    <property type="resolution" value="1.99 A"/>
    <property type="chains" value="A=1-357"/>
</dbReference>
<dbReference type="PDB" id="6AI7">
    <property type="method" value="X-ray"/>
    <property type="resolution" value="2.07 A"/>
    <property type="chains" value="A=1-357"/>
</dbReference>
<dbReference type="PDB" id="7BSR">
    <property type="method" value="X-ray"/>
    <property type="resolution" value="1.89 A"/>
    <property type="chains" value="A=1-357"/>
</dbReference>
<dbReference type="PDBsum" id="5ZZP"/>
<dbReference type="PDBsum" id="5ZZQ"/>
<dbReference type="PDBsum" id="5ZZR"/>
<dbReference type="PDBsum" id="5ZZS"/>
<dbReference type="PDBsum" id="5ZZT"/>
<dbReference type="PDBsum" id="5ZZX"/>
<dbReference type="PDBsum" id="5ZZY"/>
<dbReference type="PDBsum" id="5ZZZ"/>
<dbReference type="PDBsum" id="6A00"/>
<dbReference type="PDBsum" id="6A01"/>
<dbReference type="PDBsum" id="6A08"/>
<dbReference type="PDBsum" id="6A0B"/>
<dbReference type="PDBsum" id="6A0D"/>
<dbReference type="PDBsum" id="6A0G"/>
<dbReference type="PDBsum" id="6A0M"/>
<dbReference type="PDBsum" id="6A0O"/>
<dbReference type="PDBsum" id="6A0V"/>
<dbReference type="PDBsum" id="6A0Y"/>
<dbReference type="PDBsum" id="6A11"/>
<dbReference type="PDBsum" id="6A13"/>
<dbReference type="PDBsum" id="6A19"/>
<dbReference type="PDBsum" id="6A1A"/>
<dbReference type="PDBsum" id="6A1B"/>
<dbReference type="PDBsum" id="6A1H"/>
<dbReference type="PDBsum" id="6A1L"/>
<dbReference type="PDBsum" id="6A1M"/>
<dbReference type="PDBsum" id="6A1N"/>
<dbReference type="PDBsum" id="6A1P"/>
<dbReference type="PDBsum" id="6A1R"/>
<dbReference type="PDBsum" id="6A1W"/>
<dbReference type="PDBsum" id="6A21"/>
<dbReference type="PDBsum" id="6A23"/>
<dbReference type="PDBsum" id="6A24"/>
<dbReference type="PDBsum" id="6A36"/>
<dbReference type="PDBsum" id="6A39"/>
<dbReference type="PDBsum" id="6A3D"/>
<dbReference type="PDBsum" id="6A3T"/>
<dbReference type="PDBsum" id="6A4G"/>
<dbReference type="PDBsum" id="6A4H"/>
<dbReference type="PDBsum" id="6AI7"/>
<dbReference type="PDBsum" id="7BSR"/>
<dbReference type="SMR" id="O52792"/>
<dbReference type="STRING" id="31958.SD37_33640"/>
<dbReference type="KEGG" id="ag:CAA11762"/>
<dbReference type="UniPathway" id="UPA00162"/>
<dbReference type="GO" id="GO:0010181">
    <property type="term" value="F:FMN binding"/>
    <property type="evidence" value="ECO:0000314"/>
    <property type="project" value="UniProtKB"/>
</dbReference>
<dbReference type="GO" id="GO:0016899">
    <property type="term" value="F:oxidoreductase activity, acting on the CH-OH group of donors, oxygen as acceptor"/>
    <property type="evidence" value="ECO:0000314"/>
    <property type="project" value="UniProtKB"/>
</dbReference>
<dbReference type="GO" id="GO:0033072">
    <property type="term" value="P:vancomycin biosynthetic process"/>
    <property type="evidence" value="ECO:0000314"/>
    <property type="project" value="UniProtKB"/>
</dbReference>
<dbReference type="CDD" id="cd02809">
    <property type="entry name" value="alpha_hydroxyacid_oxid_FMN"/>
    <property type="match status" value="1"/>
</dbReference>
<dbReference type="FunFam" id="3.20.20.70:FF:000029">
    <property type="entry name" value="L-lactate dehydrogenase"/>
    <property type="match status" value="1"/>
</dbReference>
<dbReference type="Gene3D" id="3.20.20.70">
    <property type="entry name" value="Aldolase class I"/>
    <property type="match status" value="1"/>
</dbReference>
<dbReference type="InterPro" id="IPR013785">
    <property type="entry name" value="Aldolase_TIM"/>
</dbReference>
<dbReference type="InterPro" id="IPR012133">
    <property type="entry name" value="Alpha-hydoxy_acid_DH_FMN"/>
</dbReference>
<dbReference type="InterPro" id="IPR000262">
    <property type="entry name" value="FMN-dep_DH"/>
</dbReference>
<dbReference type="InterPro" id="IPR037396">
    <property type="entry name" value="FMN_HAD"/>
</dbReference>
<dbReference type="InterPro" id="IPR008259">
    <property type="entry name" value="FMN_hydac_DH_AS"/>
</dbReference>
<dbReference type="PANTHER" id="PTHR10578:SF107">
    <property type="entry name" value="2-HYDROXYACID OXIDASE 1"/>
    <property type="match status" value="1"/>
</dbReference>
<dbReference type="PANTHER" id="PTHR10578">
    <property type="entry name" value="S -2-HYDROXY-ACID OXIDASE-RELATED"/>
    <property type="match status" value="1"/>
</dbReference>
<dbReference type="Pfam" id="PF01070">
    <property type="entry name" value="FMN_dh"/>
    <property type="match status" value="1"/>
</dbReference>
<dbReference type="PIRSF" id="PIRSF000138">
    <property type="entry name" value="Al-hdrx_acd_dh"/>
    <property type="match status" value="1"/>
</dbReference>
<dbReference type="SUPFAM" id="SSF51395">
    <property type="entry name" value="FMN-linked oxidoreductases"/>
    <property type="match status" value="1"/>
</dbReference>
<dbReference type="PROSITE" id="PS00557">
    <property type="entry name" value="FMN_HYDROXY_ACID_DH_1"/>
    <property type="match status" value="1"/>
</dbReference>
<dbReference type="PROSITE" id="PS51349">
    <property type="entry name" value="FMN_HYDROXY_ACID_DH_2"/>
    <property type="match status" value="1"/>
</dbReference>
<proteinExistence type="evidence at protein level"/>